<sequence>MFTVISYFGFLLVALAFTLVTYLGLRAIQLI</sequence>
<dbReference type="EMBL" id="AF137379">
    <property type="protein sequence ID" value="AAD54827.1"/>
    <property type="molecule type" value="Genomic_DNA"/>
</dbReference>
<dbReference type="RefSeq" id="NP_050856.1">
    <property type="nucleotide sequence ID" value="NC_000927.1"/>
</dbReference>
<dbReference type="SMR" id="Q9TKY9"/>
<dbReference type="GeneID" id="802018"/>
<dbReference type="GO" id="GO:0009535">
    <property type="term" value="C:chloroplast thylakoid membrane"/>
    <property type="evidence" value="ECO:0007669"/>
    <property type="project" value="UniProtKB-SubCell"/>
</dbReference>
<dbReference type="GO" id="GO:0009512">
    <property type="term" value="C:cytochrome b6f complex"/>
    <property type="evidence" value="ECO:0007669"/>
    <property type="project" value="InterPro"/>
</dbReference>
<dbReference type="GO" id="GO:0045158">
    <property type="term" value="F:electron transporter, transferring electrons within cytochrome b6/f complex of photosystem II activity"/>
    <property type="evidence" value="ECO:0007669"/>
    <property type="project" value="UniProtKB-UniRule"/>
</dbReference>
<dbReference type="GO" id="GO:0015979">
    <property type="term" value="P:photosynthesis"/>
    <property type="evidence" value="ECO:0007669"/>
    <property type="project" value="UniProtKB-KW"/>
</dbReference>
<dbReference type="HAMAP" id="MF_00433">
    <property type="entry name" value="Cytb6_f_PetL"/>
    <property type="match status" value="1"/>
</dbReference>
<dbReference type="InterPro" id="IPR007802">
    <property type="entry name" value="Cyt_b6/f_cplx_su6"/>
</dbReference>
<dbReference type="Pfam" id="PF05115">
    <property type="entry name" value="PetL"/>
    <property type="match status" value="1"/>
</dbReference>
<dbReference type="SUPFAM" id="SSF103436">
    <property type="entry name" value="PetL subunit of the cytochrome b6f complex"/>
    <property type="match status" value="1"/>
</dbReference>
<accession>Q9TKY9</accession>
<evidence type="ECO:0000255" key="1">
    <source>
        <dbReference type="HAMAP-Rule" id="MF_00433"/>
    </source>
</evidence>
<geneLocation type="chloroplast"/>
<protein>
    <recommendedName>
        <fullName evidence="1">Cytochrome b6-f complex subunit 6</fullName>
    </recommendedName>
    <alternativeName>
        <fullName evidence="1">Cytochrome b6-f complex subunit PetL</fullName>
    </alternativeName>
    <alternativeName>
        <fullName evidence="1">Cytochrome b6-f complex subunit VI</fullName>
    </alternativeName>
</protein>
<feature type="chain" id="PRO_0000220459" description="Cytochrome b6-f complex subunit 6">
    <location>
        <begin position="1"/>
        <end position="31"/>
    </location>
</feature>
<feature type="transmembrane region" description="Helical" evidence="1">
    <location>
        <begin position="4"/>
        <end position="24"/>
    </location>
</feature>
<name>PETL_NEPOL</name>
<comment type="function">
    <text evidence="1">Component of the cytochrome b6-f complex, which mediates electron transfer between photosystem II (PSII) and photosystem I (PSI), cyclic electron flow around PSI, and state transitions. PetL is important for photoautotrophic growth as well as for electron transfer efficiency and stability of the cytochrome b6-f complex.</text>
</comment>
<comment type="subunit">
    <text evidence="1">The 4 large subunits of the cytochrome b6-f complex are cytochrome b6, subunit IV (17 kDa polypeptide, PetD), cytochrome f and the Rieske protein, while the 4 small subunits are PetG, PetL, PetM and PetN. The complex functions as a dimer.</text>
</comment>
<comment type="subcellular location">
    <subcellularLocation>
        <location evidence="1">Plastid</location>
        <location evidence="1">Chloroplast thylakoid membrane</location>
        <topology evidence="1">Single-pass membrane protein</topology>
    </subcellularLocation>
</comment>
<comment type="similarity">
    <text evidence="1">Belongs to the PetL family.</text>
</comment>
<proteinExistence type="inferred from homology"/>
<gene>
    <name evidence="1" type="primary">petL</name>
</gene>
<organism>
    <name type="scientific">Nephroselmis olivacea</name>
    <name type="common">Green alga</name>
    <dbReference type="NCBI Taxonomy" id="31312"/>
    <lineage>
        <taxon>Eukaryota</taxon>
        <taxon>Viridiplantae</taxon>
        <taxon>Chlorophyta</taxon>
        <taxon>Nephroselmidophyceae</taxon>
        <taxon>Nephroselmidales</taxon>
        <taxon>Nephroselmidaceae</taxon>
        <taxon>Nephroselmis</taxon>
    </lineage>
</organism>
<keyword id="KW-0150">Chloroplast</keyword>
<keyword id="KW-0249">Electron transport</keyword>
<keyword id="KW-0472">Membrane</keyword>
<keyword id="KW-0602">Photosynthesis</keyword>
<keyword id="KW-0934">Plastid</keyword>
<keyword id="KW-0793">Thylakoid</keyword>
<keyword id="KW-0812">Transmembrane</keyword>
<keyword id="KW-1133">Transmembrane helix</keyword>
<keyword id="KW-0813">Transport</keyword>
<reference key="1">
    <citation type="journal article" date="1999" name="Proc. Natl. Acad. Sci. U.S.A.">
        <title>The complete chloroplast DNA sequence of the green alga Nephroselmis olivacea: insights into the architecture of ancestral chloroplast genomes.</title>
        <authorList>
            <person name="Turmel M."/>
            <person name="Otis C."/>
            <person name="Lemieux C."/>
        </authorList>
    </citation>
    <scope>NUCLEOTIDE SEQUENCE [LARGE SCALE GENOMIC DNA]</scope>
    <source>
        <strain>NIES-484 / S-N-5-8</strain>
    </source>
</reference>